<gene>
    <name evidence="1" type="primary">mnmA</name>
    <name type="ordered locus">Ent638_1646</name>
</gene>
<reference key="1">
    <citation type="journal article" date="2010" name="PLoS Genet.">
        <title>Genome sequence of the plant growth promoting endophytic bacterium Enterobacter sp. 638.</title>
        <authorList>
            <person name="Taghavi S."/>
            <person name="van der Lelie D."/>
            <person name="Hoffman A."/>
            <person name="Zhang Y.B."/>
            <person name="Walla M.D."/>
            <person name="Vangronsveld J."/>
            <person name="Newman L."/>
            <person name="Monchy S."/>
        </authorList>
    </citation>
    <scope>NUCLEOTIDE SEQUENCE [LARGE SCALE GENOMIC DNA]</scope>
    <source>
        <strain>638</strain>
    </source>
</reference>
<proteinExistence type="inferred from homology"/>
<comment type="function">
    <text evidence="1">Catalyzes the 2-thiolation of uridine at the wobble position (U34) of tRNA(Lys), tRNA(Glu) and tRNA(Gln), leading to the formation of s(2)U34, the first step of tRNA-mnm(5)s(2)U34 synthesis. Sulfur is provided by IscS, via a sulfur-relay system. Binds ATP and its substrate tRNAs.</text>
</comment>
<comment type="catalytic activity">
    <reaction evidence="1">
        <text>S-sulfanyl-L-cysteinyl-[protein] + uridine(34) in tRNA + AH2 + ATP = 2-thiouridine(34) in tRNA + L-cysteinyl-[protein] + A + AMP + diphosphate + H(+)</text>
        <dbReference type="Rhea" id="RHEA:47032"/>
        <dbReference type="Rhea" id="RHEA-COMP:10131"/>
        <dbReference type="Rhea" id="RHEA-COMP:11726"/>
        <dbReference type="Rhea" id="RHEA-COMP:11727"/>
        <dbReference type="Rhea" id="RHEA-COMP:11728"/>
        <dbReference type="ChEBI" id="CHEBI:13193"/>
        <dbReference type="ChEBI" id="CHEBI:15378"/>
        <dbReference type="ChEBI" id="CHEBI:17499"/>
        <dbReference type="ChEBI" id="CHEBI:29950"/>
        <dbReference type="ChEBI" id="CHEBI:30616"/>
        <dbReference type="ChEBI" id="CHEBI:33019"/>
        <dbReference type="ChEBI" id="CHEBI:61963"/>
        <dbReference type="ChEBI" id="CHEBI:65315"/>
        <dbReference type="ChEBI" id="CHEBI:87170"/>
        <dbReference type="ChEBI" id="CHEBI:456215"/>
        <dbReference type="EC" id="2.8.1.13"/>
    </reaction>
</comment>
<comment type="subunit">
    <text evidence="1">Interacts with TusE.</text>
</comment>
<comment type="subcellular location">
    <subcellularLocation>
        <location evidence="1">Cytoplasm</location>
    </subcellularLocation>
</comment>
<comment type="similarity">
    <text evidence="1">Belongs to the MnmA/TRMU family.</text>
</comment>
<protein>
    <recommendedName>
        <fullName evidence="1">tRNA-specific 2-thiouridylase MnmA</fullName>
        <ecNumber evidence="1">2.8.1.13</ecNumber>
    </recommendedName>
</protein>
<organism>
    <name type="scientific">Enterobacter sp. (strain 638)</name>
    <dbReference type="NCBI Taxonomy" id="399742"/>
    <lineage>
        <taxon>Bacteria</taxon>
        <taxon>Pseudomonadati</taxon>
        <taxon>Pseudomonadota</taxon>
        <taxon>Gammaproteobacteria</taxon>
        <taxon>Enterobacterales</taxon>
        <taxon>Enterobacteriaceae</taxon>
        <taxon>Enterobacter</taxon>
    </lineage>
</organism>
<evidence type="ECO:0000255" key="1">
    <source>
        <dbReference type="HAMAP-Rule" id="MF_00144"/>
    </source>
</evidence>
<name>MNMA_ENT38</name>
<feature type="chain" id="PRO_0000349624" description="tRNA-specific 2-thiouridylase MnmA">
    <location>
        <begin position="1"/>
        <end position="369"/>
    </location>
</feature>
<feature type="region of interest" description="Interaction with target base in tRNA" evidence="1">
    <location>
        <begin position="97"/>
        <end position="99"/>
    </location>
</feature>
<feature type="region of interest" description="Interaction with tRNA" evidence="1">
    <location>
        <begin position="149"/>
        <end position="151"/>
    </location>
</feature>
<feature type="region of interest" description="Interaction with tRNA" evidence="1">
    <location>
        <begin position="311"/>
        <end position="312"/>
    </location>
</feature>
<feature type="active site" description="Nucleophile" evidence="1">
    <location>
        <position position="102"/>
    </location>
</feature>
<feature type="active site" description="Cysteine persulfide intermediate" evidence="1">
    <location>
        <position position="199"/>
    </location>
</feature>
<feature type="binding site" evidence="1">
    <location>
        <begin position="11"/>
        <end position="18"/>
    </location>
    <ligand>
        <name>ATP</name>
        <dbReference type="ChEBI" id="CHEBI:30616"/>
    </ligand>
</feature>
<feature type="binding site" evidence="1">
    <location>
        <position position="37"/>
    </location>
    <ligand>
        <name>ATP</name>
        <dbReference type="ChEBI" id="CHEBI:30616"/>
    </ligand>
</feature>
<feature type="binding site" evidence="1">
    <location>
        <position position="127"/>
    </location>
    <ligand>
        <name>ATP</name>
        <dbReference type="ChEBI" id="CHEBI:30616"/>
    </ligand>
</feature>
<feature type="site" description="Interaction with tRNA" evidence="1">
    <location>
        <position position="128"/>
    </location>
</feature>
<feature type="site" description="Interaction with tRNA" evidence="1">
    <location>
        <position position="344"/>
    </location>
</feature>
<feature type="disulfide bond" description="Alternate" evidence="1">
    <location>
        <begin position="102"/>
        <end position="199"/>
    </location>
</feature>
<accession>A4W9E5</accession>
<sequence length="369" mass="40971">MSASPKKVIVGMSGGVDSSVSAWLLQQQGYQVEGLFMKNWEEDDGEEYCTAAADLADAQAVCDKLGIELHTVNFAAEYWDNVFELFLEEYKAGRTPNPDILCNKEIKFKAFLEFAAEDLGADFIATGHYVRRADVDGKSQLLRGLDGNKDQSYFLYTLGHDQIVQSLFPVGELEKPEVRKIAENLDLITAKKKDSTGICFIGERKFREFLGRYLPAQPGKIITVDGDDVGEHQGLMYHTLGQRKGLGIGGTKEGSEEPWYVVDKDVENNILVVAQGHEHPRLMSVGLIAQQLHWVDREPFTGTLRCTVKTRYRQTDIPCTVTALDEERVEVRFDEPVSAVTPGQSAVFYSGEICLGGGIIEQRLPLAAV</sequence>
<keyword id="KW-0067">ATP-binding</keyword>
<keyword id="KW-0963">Cytoplasm</keyword>
<keyword id="KW-1015">Disulfide bond</keyword>
<keyword id="KW-0547">Nucleotide-binding</keyword>
<keyword id="KW-0694">RNA-binding</keyword>
<keyword id="KW-0808">Transferase</keyword>
<keyword id="KW-0819">tRNA processing</keyword>
<keyword id="KW-0820">tRNA-binding</keyword>
<dbReference type="EC" id="2.8.1.13" evidence="1"/>
<dbReference type="EMBL" id="CP000653">
    <property type="protein sequence ID" value="ABP60325.1"/>
    <property type="molecule type" value="Genomic_DNA"/>
</dbReference>
<dbReference type="RefSeq" id="WP_012017041.1">
    <property type="nucleotide sequence ID" value="NC_009436.1"/>
</dbReference>
<dbReference type="SMR" id="A4W9E5"/>
<dbReference type="STRING" id="399742.Ent638_1646"/>
<dbReference type="KEGG" id="ent:Ent638_1646"/>
<dbReference type="eggNOG" id="COG0482">
    <property type="taxonomic scope" value="Bacteria"/>
</dbReference>
<dbReference type="HOGENOM" id="CLU_035188_1_0_6"/>
<dbReference type="OrthoDB" id="9800696at2"/>
<dbReference type="Proteomes" id="UP000000230">
    <property type="component" value="Chromosome"/>
</dbReference>
<dbReference type="GO" id="GO:0005737">
    <property type="term" value="C:cytoplasm"/>
    <property type="evidence" value="ECO:0007669"/>
    <property type="project" value="UniProtKB-SubCell"/>
</dbReference>
<dbReference type="GO" id="GO:0005524">
    <property type="term" value="F:ATP binding"/>
    <property type="evidence" value="ECO:0007669"/>
    <property type="project" value="UniProtKB-KW"/>
</dbReference>
<dbReference type="GO" id="GO:0000049">
    <property type="term" value="F:tRNA binding"/>
    <property type="evidence" value="ECO:0007669"/>
    <property type="project" value="UniProtKB-KW"/>
</dbReference>
<dbReference type="GO" id="GO:0103016">
    <property type="term" value="F:tRNA-uridine 2-sulfurtransferase activity"/>
    <property type="evidence" value="ECO:0007669"/>
    <property type="project" value="UniProtKB-EC"/>
</dbReference>
<dbReference type="GO" id="GO:0002143">
    <property type="term" value="P:tRNA wobble position uridine thiolation"/>
    <property type="evidence" value="ECO:0007669"/>
    <property type="project" value="TreeGrafter"/>
</dbReference>
<dbReference type="CDD" id="cd01998">
    <property type="entry name" value="MnmA_TRMU-like"/>
    <property type="match status" value="1"/>
</dbReference>
<dbReference type="FunFam" id="2.30.30.280:FF:000001">
    <property type="entry name" value="tRNA-specific 2-thiouridylase MnmA"/>
    <property type="match status" value="1"/>
</dbReference>
<dbReference type="FunFam" id="2.40.30.10:FF:000023">
    <property type="entry name" value="tRNA-specific 2-thiouridylase MnmA"/>
    <property type="match status" value="1"/>
</dbReference>
<dbReference type="FunFam" id="3.40.50.620:FF:000004">
    <property type="entry name" value="tRNA-specific 2-thiouridylase MnmA"/>
    <property type="match status" value="1"/>
</dbReference>
<dbReference type="Gene3D" id="2.30.30.280">
    <property type="entry name" value="Adenine nucleotide alpha hydrolases-like domains"/>
    <property type="match status" value="1"/>
</dbReference>
<dbReference type="Gene3D" id="3.40.50.620">
    <property type="entry name" value="HUPs"/>
    <property type="match status" value="1"/>
</dbReference>
<dbReference type="Gene3D" id="2.40.30.10">
    <property type="entry name" value="Translation factors"/>
    <property type="match status" value="1"/>
</dbReference>
<dbReference type="HAMAP" id="MF_00144">
    <property type="entry name" value="tRNA_thiouridyl_MnmA"/>
    <property type="match status" value="1"/>
</dbReference>
<dbReference type="InterPro" id="IPR004506">
    <property type="entry name" value="MnmA-like"/>
</dbReference>
<dbReference type="InterPro" id="IPR046885">
    <property type="entry name" value="MnmA-like_C"/>
</dbReference>
<dbReference type="InterPro" id="IPR046884">
    <property type="entry name" value="MnmA-like_central"/>
</dbReference>
<dbReference type="InterPro" id="IPR023382">
    <property type="entry name" value="MnmA-like_central_sf"/>
</dbReference>
<dbReference type="InterPro" id="IPR014729">
    <property type="entry name" value="Rossmann-like_a/b/a_fold"/>
</dbReference>
<dbReference type="NCBIfam" id="NF001138">
    <property type="entry name" value="PRK00143.1"/>
    <property type="match status" value="1"/>
</dbReference>
<dbReference type="NCBIfam" id="TIGR00420">
    <property type="entry name" value="trmU"/>
    <property type="match status" value="1"/>
</dbReference>
<dbReference type="PANTHER" id="PTHR11933:SF5">
    <property type="entry name" value="MITOCHONDRIAL TRNA-SPECIFIC 2-THIOURIDYLASE 1"/>
    <property type="match status" value="1"/>
</dbReference>
<dbReference type="PANTHER" id="PTHR11933">
    <property type="entry name" value="TRNA 5-METHYLAMINOMETHYL-2-THIOURIDYLATE -METHYLTRANSFERASE"/>
    <property type="match status" value="1"/>
</dbReference>
<dbReference type="Pfam" id="PF03054">
    <property type="entry name" value="tRNA_Me_trans"/>
    <property type="match status" value="1"/>
</dbReference>
<dbReference type="Pfam" id="PF20258">
    <property type="entry name" value="tRNA_Me_trans_C"/>
    <property type="match status" value="1"/>
</dbReference>
<dbReference type="Pfam" id="PF20259">
    <property type="entry name" value="tRNA_Me_trans_M"/>
    <property type="match status" value="1"/>
</dbReference>
<dbReference type="SUPFAM" id="SSF52402">
    <property type="entry name" value="Adenine nucleotide alpha hydrolases-like"/>
    <property type="match status" value="1"/>
</dbReference>